<name>HEMA_I78A9</name>
<protein>
    <recommendedName>
        <fullName evidence="1">Hemagglutinin</fullName>
    </recommendedName>
    <component>
        <recommendedName>
            <fullName evidence="1">Hemagglutinin HA1 chain</fullName>
        </recommendedName>
    </component>
    <component>
        <recommendedName>
            <fullName evidence="1">Hemagglutinin HA2 chain</fullName>
        </recommendedName>
    </component>
</protein>
<organismHost>
    <name type="scientific">Aves</name>
    <dbReference type="NCBI Taxonomy" id="8782"/>
</organismHost>
<organismHost>
    <name type="scientific">Cetacea</name>
    <name type="common">whales</name>
    <dbReference type="NCBI Taxonomy" id="9721"/>
</organismHost>
<organismHost>
    <name type="scientific">Homo sapiens</name>
    <name type="common">Human</name>
    <dbReference type="NCBI Taxonomy" id="9606"/>
</organismHost>
<organismHost>
    <name type="scientific">Phocidae</name>
    <name type="common">true seals</name>
    <dbReference type="NCBI Taxonomy" id="9709"/>
</organismHost>
<organismHost>
    <name type="scientific">Sus scrofa</name>
    <name type="common">Pig</name>
    <dbReference type="NCBI Taxonomy" id="9823"/>
</organismHost>
<dbReference type="EMBL" id="M19057">
    <property type="protein sequence ID" value="AAA43212.1"/>
    <property type="molecule type" value="Genomic_RNA"/>
</dbReference>
<dbReference type="PIR" id="B29971">
    <property type="entry name" value="HMIVS3"/>
</dbReference>
<dbReference type="PDB" id="1R5I">
    <property type="method" value="X-ray"/>
    <property type="resolution" value="2.60 A"/>
    <property type="chains" value="C/G=306-318"/>
</dbReference>
<dbReference type="PDBsum" id="1R5I"/>
<dbReference type="SMR" id="P11133"/>
<dbReference type="GlyCosmos" id="P11133">
    <property type="glycosylation" value="6 sites, No reported glycans"/>
</dbReference>
<dbReference type="EvolutionaryTrace" id="P11133"/>
<dbReference type="GO" id="GO:0020002">
    <property type="term" value="C:host cell plasma membrane"/>
    <property type="evidence" value="ECO:0007669"/>
    <property type="project" value="UniProtKB-SubCell"/>
</dbReference>
<dbReference type="GO" id="GO:0016020">
    <property type="term" value="C:membrane"/>
    <property type="evidence" value="ECO:0007669"/>
    <property type="project" value="UniProtKB-KW"/>
</dbReference>
<dbReference type="GO" id="GO:0019031">
    <property type="term" value="C:viral envelope"/>
    <property type="evidence" value="ECO:0007669"/>
    <property type="project" value="UniProtKB-KW"/>
</dbReference>
<dbReference type="GO" id="GO:0055036">
    <property type="term" value="C:virion membrane"/>
    <property type="evidence" value="ECO:0007669"/>
    <property type="project" value="UniProtKB-SubCell"/>
</dbReference>
<dbReference type="GO" id="GO:0046789">
    <property type="term" value="F:host cell surface receptor binding"/>
    <property type="evidence" value="ECO:0007669"/>
    <property type="project" value="InterPro"/>
</dbReference>
<dbReference type="GO" id="GO:0075512">
    <property type="term" value="P:clathrin-dependent endocytosis of virus by host cell"/>
    <property type="evidence" value="ECO:0007669"/>
    <property type="project" value="UniProtKB-KW"/>
</dbReference>
<dbReference type="GO" id="GO:0039654">
    <property type="term" value="P:fusion of virus membrane with host endosome membrane"/>
    <property type="evidence" value="ECO:0007669"/>
    <property type="project" value="UniProtKB-KW"/>
</dbReference>
<dbReference type="GO" id="GO:0019064">
    <property type="term" value="P:fusion of virus membrane with host plasma membrane"/>
    <property type="evidence" value="ECO:0007669"/>
    <property type="project" value="InterPro"/>
</dbReference>
<dbReference type="GO" id="GO:0019062">
    <property type="term" value="P:virion attachment to host cell"/>
    <property type="evidence" value="ECO:0007669"/>
    <property type="project" value="UniProtKB-KW"/>
</dbReference>
<dbReference type="FunFam" id="3.90.20.10:FF:000001">
    <property type="entry name" value="Hemagglutinin"/>
    <property type="match status" value="1"/>
</dbReference>
<dbReference type="FunFam" id="3.90.209.20:FF:000001">
    <property type="entry name" value="Hemagglutinin"/>
    <property type="match status" value="1"/>
</dbReference>
<dbReference type="Gene3D" id="3.90.20.10">
    <property type="match status" value="1"/>
</dbReference>
<dbReference type="Gene3D" id="3.90.209.20">
    <property type="match status" value="1"/>
</dbReference>
<dbReference type="HAMAP" id="MF_04072">
    <property type="entry name" value="INFV_HEMA"/>
    <property type="match status" value="1"/>
</dbReference>
<dbReference type="InterPro" id="IPR008980">
    <property type="entry name" value="Capsid_hemagglutn"/>
</dbReference>
<dbReference type="InterPro" id="IPR013828">
    <property type="entry name" value="Hemagglutn_HA1_a/b_dom_sf"/>
</dbReference>
<dbReference type="InterPro" id="IPR000149">
    <property type="entry name" value="Hemagglutn_influenz_A"/>
</dbReference>
<dbReference type="InterPro" id="IPR001364">
    <property type="entry name" value="Hemagglutn_influenz_A/B"/>
</dbReference>
<dbReference type="Pfam" id="PF00509">
    <property type="entry name" value="Hemagglutinin"/>
    <property type="match status" value="1"/>
</dbReference>
<dbReference type="PRINTS" id="PR00330">
    <property type="entry name" value="HEMAGGLUTN1"/>
</dbReference>
<dbReference type="PRINTS" id="PR00329">
    <property type="entry name" value="HEMAGGLUTN12"/>
</dbReference>
<dbReference type="SUPFAM" id="SSF58064">
    <property type="entry name" value="Influenza hemagglutinin (stalk)"/>
    <property type="match status" value="1"/>
</dbReference>
<dbReference type="SUPFAM" id="SSF49818">
    <property type="entry name" value="Viral protein domain"/>
    <property type="match status" value="1"/>
</dbReference>
<comment type="function">
    <text evidence="1">Binds to sialic acid-containing receptors on the cell surface, bringing about the attachment of the virus particle to the cell. This attachment induces virion internalization either through clathrin-dependent endocytosis or through clathrin- and caveolin-independent pathway. Plays a major role in the determination of host range restriction and virulence. Class I viral fusion protein. Responsible for penetration of the virus into the cell cytoplasm by mediating the fusion of the membrane of the endocytosed virus particle with the endosomal membrane. Low pH in endosomes induces an irreversible conformational change in HA2, releasing the fusion hydrophobic peptide. Several trimers are required to form a competent fusion pore.</text>
</comment>
<comment type="subunit">
    <text evidence="1">Homotrimer of disulfide-linked HA1-HA2.</text>
</comment>
<comment type="subcellular location">
    <subcellularLocation>
        <location evidence="1">Virion membrane</location>
        <topology evidence="1">Single-pass type I membrane protein</topology>
    </subcellularLocation>
    <subcellularLocation>
        <location evidence="1">Host apical cell membrane</location>
        <topology evidence="1">Single-pass type I membrane protein</topology>
    </subcellularLocation>
    <text evidence="1">Targeted to the apical plasma membrane in epithelial polarized cells through a signal present in the transmembrane domain. Associated with glycosphingolipid- and cholesterol-enriched detergent-resistant lipid rafts.</text>
</comment>
<comment type="PTM">
    <text evidence="1">Palmitoylated.</text>
</comment>
<comment type="PTM">
    <text evidence="1">In natural infection, inactive HA is matured into HA1 and HA2 outside the cell by one or more trypsin-like, arginine-specific endoprotease secreted by the bronchial epithelial cells. One identified protease that may be involved in this process is secreted in lungs by club cells.</text>
</comment>
<comment type="miscellaneous">
    <text>Major glycoprotein, comprises over 80% of the envelope proteins present in virus particle.</text>
</comment>
<comment type="miscellaneous">
    <text>The extent of infection into host organism is determined by HA. Influenza viruses bud from the apical surface of polarized epithelial cells (e.g. bronchial epithelial cells) into lumen of lungs and are therefore usually pneumotropic. The reason is that HA is cleaved by tryptase clara which is restricted to lungs. However, HAs of H5 and H7 pantropic avian viruses subtypes can be cleaved by furin and subtilisin-type enzymes, allowing the virus to grow in other organs than lungs.</text>
</comment>
<comment type="miscellaneous">
    <text>The influenza A genome consist of 8 RNA segments. Genetic variation of hemagglutinin and/or neuraminidase genes results in the emergence of new influenza strains. The mechanism of variation can be the result of point mutations or the result of genetic reassortment between segments of two different strains.</text>
</comment>
<comment type="similarity">
    <text evidence="1">Belongs to the influenza viruses hemagglutinin family.</text>
</comment>
<organism>
    <name type="scientific">Influenza A virus (strain A/Swine/Hong Kong/81/1978 H3N2)</name>
    <dbReference type="NCBI Taxonomy" id="384484"/>
    <lineage>
        <taxon>Viruses</taxon>
        <taxon>Riboviria</taxon>
        <taxon>Orthornavirae</taxon>
        <taxon>Negarnaviricota</taxon>
        <taxon>Polyploviricotina</taxon>
        <taxon>Insthoviricetes</taxon>
        <taxon>Articulavirales</taxon>
        <taxon>Orthomyxoviridae</taxon>
        <taxon>Alphainfluenzavirus</taxon>
        <taxon>Alphainfluenzavirus influenzae</taxon>
        <taxon>Influenza A virus</taxon>
    </lineage>
</organism>
<accession>P11133</accession>
<accession>Q84019</accession>
<accession>Q84020</accession>
<keyword id="KW-0002">3D-structure</keyword>
<keyword id="KW-1167">Clathrin- and caveolin-independent endocytosis of virus by host</keyword>
<keyword id="KW-1165">Clathrin-mediated endocytosis of virus by host</keyword>
<keyword id="KW-1015">Disulfide bond</keyword>
<keyword id="KW-1170">Fusion of virus membrane with host endosomal membrane</keyword>
<keyword id="KW-1168">Fusion of virus membrane with host membrane</keyword>
<keyword id="KW-0325">Glycoprotein</keyword>
<keyword id="KW-0348">Hemagglutinin</keyword>
<keyword id="KW-1032">Host cell membrane</keyword>
<keyword id="KW-1043">Host membrane</keyword>
<keyword id="KW-0945">Host-virus interaction</keyword>
<keyword id="KW-0449">Lipoprotein</keyword>
<keyword id="KW-0472">Membrane</keyword>
<keyword id="KW-0564">Palmitate</keyword>
<keyword id="KW-0812">Transmembrane</keyword>
<keyword id="KW-1133">Transmembrane helix</keyword>
<keyword id="KW-1161">Viral attachment to host cell</keyword>
<keyword id="KW-0261">Viral envelope protein</keyword>
<keyword id="KW-1162">Viral penetration into host cytoplasm</keyword>
<keyword id="KW-0946">Virion</keyword>
<keyword id="KW-1164">Virus endocytosis by host</keyword>
<keyword id="KW-1160">Virus entry into host cell</keyword>
<reference key="1">
    <citation type="journal article" date="1988" name="Virology">
        <title>Origin of the hemagglutinin gene of H3N2 influenza viruses from pigs in China.</title>
        <authorList>
            <person name="Kida H."/>
            <person name="Shortridge K.F."/>
            <person name="Webster R.G."/>
        </authorList>
    </citation>
    <scope>NUCLEOTIDE SEQUENCE [GENOMIC RNA]</scope>
</reference>
<proteinExistence type="evidence at protein level"/>
<gene>
    <name evidence="1" type="primary">HA</name>
</gene>
<feature type="chain" id="PRO_0000440842" description="Hemagglutinin HA1 chain" evidence="1">
    <location>
        <begin position="1"/>
        <end position="329"/>
    </location>
</feature>
<feature type="chain" id="PRO_0000039076" description="Hemagglutinin HA2 chain" evidence="1">
    <location>
        <begin position="330"/>
        <end position="550"/>
    </location>
</feature>
<feature type="topological domain" description="Extracellular" evidence="1">
    <location>
        <begin position="1"/>
        <end position="514"/>
    </location>
</feature>
<feature type="transmembrane region" description="Helical" evidence="1">
    <location>
        <begin position="515"/>
        <end position="535"/>
    </location>
</feature>
<feature type="topological domain" description="Cytoplasmic" evidence="1">
    <location>
        <begin position="536"/>
        <end position="550"/>
    </location>
</feature>
<feature type="site" description="Cleavage; by host" evidence="1">
    <location>
        <begin position="329"/>
        <end position="330"/>
    </location>
</feature>
<feature type="lipid moiety-binding region" description="S-palmitoyl cysteine; by host" evidence="1">
    <location>
        <position position="539"/>
    </location>
</feature>
<feature type="lipid moiety-binding region" description="S-palmitoyl cysteine; by host" evidence="1">
    <location>
        <position position="546"/>
    </location>
</feature>
<feature type="lipid moiety-binding region" description="S-palmitoyl cysteine; by host" evidence="1">
    <location>
        <position position="549"/>
    </location>
</feature>
<feature type="glycosylation site" description="N-linked (GlcNAc...) asparagine; by host" evidence="1">
    <location>
        <position position="8"/>
    </location>
</feature>
<feature type="glycosylation site" description="N-linked (GlcNAc...) asparagine; by host" evidence="1">
    <location>
        <position position="22"/>
    </location>
</feature>
<feature type="glycosylation site" description="N-linked (GlcNAc...) asparagine; by host" evidence="1">
    <location>
        <position position="38"/>
    </location>
</feature>
<feature type="glycosylation site" description="N-linked (GlcNAc...) asparagine; by host" evidence="1">
    <location>
        <position position="165"/>
    </location>
</feature>
<feature type="glycosylation site" description="N-linked (GlcNAc...) asparagine; by host" evidence="1">
    <location>
        <position position="285"/>
    </location>
</feature>
<feature type="glycosylation site" description="N-linked (GlcNAc...) asparagine; by host" evidence="1">
    <location>
        <position position="483"/>
    </location>
</feature>
<feature type="disulfide bond" description="Interchain (between HA1 and HA2 chains)" evidence="1">
    <location>
        <begin position="14"/>
        <end position="466"/>
    </location>
</feature>
<feature type="disulfide bond" evidence="1">
    <location>
        <begin position="52"/>
        <end position="277"/>
    </location>
</feature>
<feature type="disulfide bond" evidence="1">
    <location>
        <begin position="64"/>
        <end position="76"/>
    </location>
</feature>
<feature type="disulfide bond" evidence="1">
    <location>
        <begin position="97"/>
        <end position="139"/>
    </location>
</feature>
<feature type="disulfide bond" evidence="1">
    <location>
        <begin position="281"/>
        <end position="305"/>
    </location>
</feature>
<feature type="disulfide bond" evidence="1">
    <location>
        <begin position="473"/>
        <end position="477"/>
    </location>
</feature>
<feature type="non-terminal residue">
    <location>
        <position position="1"/>
    </location>
</feature>
<sequence length="550" mass="61437">QDLPGTDNSTATLCLGHHAVPNGTIVKTITDDQIEVTNATELVQSSSTGKICNNPHKILDGIDCTLIDALLGDPHCDVFQDETWDLFVERSNAFSNCYPYDVPDYASLRSLVASSGTLEFITEGFTWTGVTQNGGSNACKRGPANGFFSRLNWLTKSGSTYPVLNVTMPNNDNSDKLYIWGVHHPSTNQEQTNLYVQASGRVTVSTKRSQQTMIPNAGSRPWVRGLSSRISIYWTIVKPGDILVINSNGNLIAPRGYFKMRTGKSSIMRSDAPIGTCSSECITPNGSIPNDKPFQNVNKITYGACPKYVKQNTLKLATGMRNVPEKQTRGLFGAIAGFIENGWEGMIDGWYGFRHQNSEGTGQAADLKSTQAAIDLINGKVNRVIEKTNEKFHQIEKEFSEVEGRIQDLEKYVEDTKIDLWSYNADVLVALENQHTIDLTDSEMNKLFEKTRRQLRENAEDMGNGCFKIYHKCDNACIESIRNGTYDHDIYRDEALNNRFQIKGVELKSGYKDWILWISFAISCFLLCVVLLGFIMWACQRGNIRCNICI</sequence>
<evidence type="ECO:0000255" key="1">
    <source>
        <dbReference type="HAMAP-Rule" id="MF_04072"/>
    </source>
</evidence>